<keyword id="KW-0963">Cytoplasm</keyword>
<keyword id="KW-0255">Endonuclease</keyword>
<keyword id="KW-0378">Hydrolase</keyword>
<keyword id="KW-0464">Manganese</keyword>
<keyword id="KW-0479">Metal-binding</keyword>
<keyword id="KW-0540">Nuclease</keyword>
<sequence length="269" mass="30915">MNLNNLENIRYNEIKEFSDKIKKEFTFSQKKQVMDIIEKLNKDSRKNVIKLGQALEKFLNKYEEELKRTNNMYNFDRRYGNNYLIAGVDEVGRGPLAGPIVAAAVVLDLNVEEMQRVFNIKDSKKLSEKKREELDIIIREKAISYNIALVDNKTIDERGISWSNNEVLKRAVEGLKVKPDLVLSDGYAVKNLNIRNEFIIKGDSKSISIASSSIIAKVYRDSMMKEYSKGLNMYGFNHNAGYGTEEHVQAIKKHGPSKIHRMSFLTNIL</sequence>
<evidence type="ECO:0000255" key="1">
    <source>
        <dbReference type="HAMAP-Rule" id="MF_00052"/>
    </source>
</evidence>
<evidence type="ECO:0000255" key="2">
    <source>
        <dbReference type="PROSITE-ProRule" id="PRU01319"/>
    </source>
</evidence>
<protein>
    <recommendedName>
        <fullName evidence="1">Ribonuclease HII</fullName>
        <shortName evidence="1">RNase HII</shortName>
        <ecNumber evidence="1">3.1.26.4</ecNumber>
    </recommendedName>
</protein>
<organism>
    <name type="scientific">Clostridium botulinum (strain ATCC 19397 / Type A)</name>
    <dbReference type="NCBI Taxonomy" id="441770"/>
    <lineage>
        <taxon>Bacteria</taxon>
        <taxon>Bacillati</taxon>
        <taxon>Bacillota</taxon>
        <taxon>Clostridia</taxon>
        <taxon>Eubacteriales</taxon>
        <taxon>Clostridiaceae</taxon>
        <taxon>Clostridium</taxon>
    </lineage>
</organism>
<name>RNH2_CLOB1</name>
<proteinExistence type="inferred from homology"/>
<accession>A7FW05</accession>
<gene>
    <name evidence="1" type="primary">rnhB</name>
    <name type="ordered locus">CLB_2305</name>
</gene>
<reference key="1">
    <citation type="journal article" date="2007" name="PLoS ONE">
        <title>Analysis of the neurotoxin complex genes in Clostridium botulinum A1-A4 and B1 strains: BoNT/A3, /Ba4 and /B1 clusters are located within plasmids.</title>
        <authorList>
            <person name="Smith T.J."/>
            <person name="Hill K.K."/>
            <person name="Foley B.T."/>
            <person name="Detter J.C."/>
            <person name="Munk A.C."/>
            <person name="Bruce D.C."/>
            <person name="Doggett N.A."/>
            <person name="Smith L.A."/>
            <person name="Marks J.D."/>
            <person name="Xie G."/>
            <person name="Brettin T.S."/>
        </authorList>
    </citation>
    <scope>NUCLEOTIDE SEQUENCE [LARGE SCALE GENOMIC DNA]</scope>
    <source>
        <strain>ATCC 19397 / Type A</strain>
    </source>
</reference>
<comment type="function">
    <text evidence="1">Endonuclease that specifically degrades the RNA of RNA-DNA hybrids.</text>
</comment>
<comment type="catalytic activity">
    <reaction evidence="1">
        <text>Endonucleolytic cleavage to 5'-phosphomonoester.</text>
        <dbReference type="EC" id="3.1.26.4"/>
    </reaction>
</comment>
<comment type="cofactor">
    <cofactor evidence="1">
        <name>Mn(2+)</name>
        <dbReference type="ChEBI" id="CHEBI:29035"/>
    </cofactor>
    <cofactor evidence="1">
        <name>Mg(2+)</name>
        <dbReference type="ChEBI" id="CHEBI:18420"/>
    </cofactor>
    <text evidence="1">Manganese or magnesium. Binds 1 divalent metal ion per monomer in the absence of substrate. May bind a second metal ion after substrate binding.</text>
</comment>
<comment type="subcellular location">
    <subcellularLocation>
        <location evidence="1">Cytoplasm</location>
    </subcellularLocation>
</comment>
<comment type="similarity">
    <text evidence="1">Belongs to the RNase HII family.</text>
</comment>
<feature type="chain" id="PRO_0000334877" description="Ribonuclease HII">
    <location>
        <begin position="1"/>
        <end position="269"/>
    </location>
</feature>
<feature type="domain" description="RNase H type-2" evidence="2">
    <location>
        <begin position="83"/>
        <end position="269"/>
    </location>
</feature>
<feature type="binding site" evidence="1">
    <location>
        <position position="89"/>
    </location>
    <ligand>
        <name>a divalent metal cation</name>
        <dbReference type="ChEBI" id="CHEBI:60240"/>
    </ligand>
</feature>
<feature type="binding site" evidence="1">
    <location>
        <position position="90"/>
    </location>
    <ligand>
        <name>a divalent metal cation</name>
        <dbReference type="ChEBI" id="CHEBI:60240"/>
    </ligand>
</feature>
<feature type="binding site" evidence="1">
    <location>
        <position position="185"/>
    </location>
    <ligand>
        <name>a divalent metal cation</name>
        <dbReference type="ChEBI" id="CHEBI:60240"/>
    </ligand>
</feature>
<dbReference type="EC" id="3.1.26.4" evidence="1"/>
<dbReference type="EMBL" id="CP000726">
    <property type="protein sequence ID" value="ABS35617.1"/>
    <property type="molecule type" value="Genomic_DNA"/>
</dbReference>
<dbReference type="RefSeq" id="WP_011986802.1">
    <property type="nucleotide sequence ID" value="NC_009697.1"/>
</dbReference>
<dbReference type="SMR" id="A7FW05"/>
<dbReference type="KEGG" id="cba:CLB_2305"/>
<dbReference type="HOGENOM" id="CLU_036532_2_1_9"/>
<dbReference type="GO" id="GO:0005737">
    <property type="term" value="C:cytoplasm"/>
    <property type="evidence" value="ECO:0007669"/>
    <property type="project" value="UniProtKB-SubCell"/>
</dbReference>
<dbReference type="GO" id="GO:0032299">
    <property type="term" value="C:ribonuclease H2 complex"/>
    <property type="evidence" value="ECO:0007669"/>
    <property type="project" value="TreeGrafter"/>
</dbReference>
<dbReference type="GO" id="GO:0030145">
    <property type="term" value="F:manganese ion binding"/>
    <property type="evidence" value="ECO:0007669"/>
    <property type="project" value="UniProtKB-UniRule"/>
</dbReference>
<dbReference type="GO" id="GO:0003723">
    <property type="term" value="F:RNA binding"/>
    <property type="evidence" value="ECO:0007669"/>
    <property type="project" value="InterPro"/>
</dbReference>
<dbReference type="GO" id="GO:0004523">
    <property type="term" value="F:RNA-DNA hybrid ribonuclease activity"/>
    <property type="evidence" value="ECO:0007669"/>
    <property type="project" value="UniProtKB-UniRule"/>
</dbReference>
<dbReference type="GO" id="GO:0043137">
    <property type="term" value="P:DNA replication, removal of RNA primer"/>
    <property type="evidence" value="ECO:0007669"/>
    <property type="project" value="TreeGrafter"/>
</dbReference>
<dbReference type="GO" id="GO:0006298">
    <property type="term" value="P:mismatch repair"/>
    <property type="evidence" value="ECO:0007669"/>
    <property type="project" value="TreeGrafter"/>
</dbReference>
<dbReference type="CDD" id="cd07182">
    <property type="entry name" value="RNase_HII_bacteria_HII_like"/>
    <property type="match status" value="1"/>
</dbReference>
<dbReference type="FunFam" id="3.30.420.10:FF:000113">
    <property type="entry name" value="Ribonuclease HII"/>
    <property type="match status" value="1"/>
</dbReference>
<dbReference type="Gene3D" id="3.30.420.10">
    <property type="entry name" value="Ribonuclease H-like superfamily/Ribonuclease H"/>
    <property type="match status" value="1"/>
</dbReference>
<dbReference type="HAMAP" id="MF_00052_B">
    <property type="entry name" value="RNase_HII_B"/>
    <property type="match status" value="1"/>
</dbReference>
<dbReference type="InterPro" id="IPR022898">
    <property type="entry name" value="RNase_HII"/>
</dbReference>
<dbReference type="InterPro" id="IPR001352">
    <property type="entry name" value="RNase_HII/HIII"/>
</dbReference>
<dbReference type="InterPro" id="IPR024567">
    <property type="entry name" value="RNase_HII/HIII_dom"/>
</dbReference>
<dbReference type="InterPro" id="IPR012337">
    <property type="entry name" value="RNaseH-like_sf"/>
</dbReference>
<dbReference type="InterPro" id="IPR036397">
    <property type="entry name" value="RNaseH_sf"/>
</dbReference>
<dbReference type="NCBIfam" id="NF000594">
    <property type="entry name" value="PRK00015.1-1"/>
    <property type="match status" value="1"/>
</dbReference>
<dbReference type="NCBIfam" id="NF000595">
    <property type="entry name" value="PRK00015.1-3"/>
    <property type="match status" value="1"/>
</dbReference>
<dbReference type="PANTHER" id="PTHR10954">
    <property type="entry name" value="RIBONUCLEASE H2 SUBUNIT A"/>
    <property type="match status" value="1"/>
</dbReference>
<dbReference type="PANTHER" id="PTHR10954:SF18">
    <property type="entry name" value="RIBONUCLEASE HII"/>
    <property type="match status" value="1"/>
</dbReference>
<dbReference type="Pfam" id="PF01351">
    <property type="entry name" value="RNase_HII"/>
    <property type="match status" value="1"/>
</dbReference>
<dbReference type="SUPFAM" id="SSF53098">
    <property type="entry name" value="Ribonuclease H-like"/>
    <property type="match status" value="1"/>
</dbReference>
<dbReference type="PROSITE" id="PS51975">
    <property type="entry name" value="RNASE_H_2"/>
    <property type="match status" value="1"/>
</dbReference>